<reference key="1">
    <citation type="journal article" date="2003" name="J. Bacteriol.">
        <title>Complete genome sequence of the ammonia-oxidizing bacterium and obligate chemolithoautotroph Nitrosomonas europaea.</title>
        <authorList>
            <person name="Chain P."/>
            <person name="Lamerdin J.E."/>
            <person name="Larimer F.W."/>
            <person name="Regala W."/>
            <person name="Lao V."/>
            <person name="Land M.L."/>
            <person name="Hauser L."/>
            <person name="Hooper A.B."/>
            <person name="Klotz M.G."/>
            <person name="Norton J."/>
            <person name="Sayavedra-Soto L.A."/>
            <person name="Arciero D.M."/>
            <person name="Hommes N.G."/>
            <person name="Whittaker M.M."/>
            <person name="Arp D.J."/>
        </authorList>
    </citation>
    <scope>NUCLEOTIDE SEQUENCE [LARGE SCALE GENOMIC DNA]</scope>
    <source>
        <strain>ATCC 19718 / CIP 103999 / KCTC 2705 / NBRC 14298</strain>
    </source>
</reference>
<evidence type="ECO:0000255" key="1">
    <source>
        <dbReference type="PROSITE-ProRule" id="PRU01182"/>
    </source>
</evidence>
<evidence type="ECO:0000305" key="2"/>
<gene>
    <name type="ordered locus">NE1464</name>
</gene>
<keyword id="KW-0378">Hydrolase</keyword>
<keyword id="KW-0479">Metal-binding</keyword>
<keyword id="KW-0482">Metalloprotease</keyword>
<keyword id="KW-0645">Protease</keyword>
<keyword id="KW-1185">Reference proteome</keyword>
<keyword id="KW-0862">Zinc</keyword>
<proteinExistence type="inferred from homology"/>
<dbReference type="EMBL" id="AL954747">
    <property type="protein sequence ID" value="CAD85375.1"/>
    <property type="molecule type" value="Genomic_DNA"/>
</dbReference>
<dbReference type="SMR" id="Q82UL9"/>
<dbReference type="STRING" id="228410.NE1464"/>
<dbReference type="GeneID" id="87104638"/>
<dbReference type="KEGG" id="neu:NE1464"/>
<dbReference type="eggNOG" id="COG2003">
    <property type="taxonomic scope" value="Bacteria"/>
</dbReference>
<dbReference type="HOGENOM" id="CLU_073529_0_1_4"/>
<dbReference type="OrthoDB" id="9804482at2"/>
<dbReference type="PhylomeDB" id="Q82UL9"/>
<dbReference type="Proteomes" id="UP000001416">
    <property type="component" value="Chromosome"/>
</dbReference>
<dbReference type="GO" id="GO:0046872">
    <property type="term" value="F:metal ion binding"/>
    <property type="evidence" value="ECO:0007669"/>
    <property type="project" value="UniProtKB-KW"/>
</dbReference>
<dbReference type="GO" id="GO:0008237">
    <property type="term" value="F:metallopeptidase activity"/>
    <property type="evidence" value="ECO:0007669"/>
    <property type="project" value="UniProtKB-KW"/>
</dbReference>
<dbReference type="GO" id="GO:0006508">
    <property type="term" value="P:proteolysis"/>
    <property type="evidence" value="ECO:0007669"/>
    <property type="project" value="UniProtKB-KW"/>
</dbReference>
<dbReference type="CDD" id="cd08071">
    <property type="entry name" value="MPN_DUF2466"/>
    <property type="match status" value="1"/>
</dbReference>
<dbReference type="Gene3D" id="1.10.150.20">
    <property type="entry name" value="5' to 3' exonuclease, C-terminal subdomain"/>
    <property type="match status" value="1"/>
</dbReference>
<dbReference type="Gene3D" id="3.40.140.10">
    <property type="entry name" value="Cytidine Deaminase, domain 2"/>
    <property type="match status" value="1"/>
</dbReference>
<dbReference type="InterPro" id="IPR037518">
    <property type="entry name" value="MPN"/>
</dbReference>
<dbReference type="InterPro" id="IPR025657">
    <property type="entry name" value="RadC_JAB"/>
</dbReference>
<dbReference type="InterPro" id="IPR010994">
    <property type="entry name" value="RuvA_2-like"/>
</dbReference>
<dbReference type="InterPro" id="IPR001405">
    <property type="entry name" value="UPF0758"/>
</dbReference>
<dbReference type="InterPro" id="IPR020891">
    <property type="entry name" value="UPF0758_CS"/>
</dbReference>
<dbReference type="InterPro" id="IPR046778">
    <property type="entry name" value="UPF0758_N"/>
</dbReference>
<dbReference type="NCBIfam" id="NF000642">
    <property type="entry name" value="PRK00024.1"/>
    <property type="match status" value="1"/>
</dbReference>
<dbReference type="NCBIfam" id="TIGR00608">
    <property type="entry name" value="radc"/>
    <property type="match status" value="1"/>
</dbReference>
<dbReference type="PANTHER" id="PTHR30471">
    <property type="entry name" value="DNA REPAIR PROTEIN RADC"/>
    <property type="match status" value="1"/>
</dbReference>
<dbReference type="PANTHER" id="PTHR30471:SF3">
    <property type="entry name" value="UPF0758 PROTEIN YEES-RELATED"/>
    <property type="match status" value="1"/>
</dbReference>
<dbReference type="Pfam" id="PF04002">
    <property type="entry name" value="RadC"/>
    <property type="match status" value="1"/>
</dbReference>
<dbReference type="Pfam" id="PF20582">
    <property type="entry name" value="UPF0758_N"/>
    <property type="match status" value="1"/>
</dbReference>
<dbReference type="SUPFAM" id="SSF47781">
    <property type="entry name" value="RuvA domain 2-like"/>
    <property type="match status" value="1"/>
</dbReference>
<dbReference type="PROSITE" id="PS50249">
    <property type="entry name" value="MPN"/>
    <property type="match status" value="1"/>
</dbReference>
<dbReference type="PROSITE" id="PS01302">
    <property type="entry name" value="UPF0758"/>
    <property type="match status" value="1"/>
</dbReference>
<organism>
    <name type="scientific">Nitrosomonas europaea (strain ATCC 19718 / CIP 103999 / KCTC 2705 / NBRC 14298)</name>
    <dbReference type="NCBI Taxonomy" id="228410"/>
    <lineage>
        <taxon>Bacteria</taxon>
        <taxon>Pseudomonadati</taxon>
        <taxon>Pseudomonadota</taxon>
        <taxon>Betaproteobacteria</taxon>
        <taxon>Nitrosomonadales</taxon>
        <taxon>Nitrosomonadaceae</taxon>
        <taxon>Nitrosomonas</taxon>
    </lineage>
</organism>
<comment type="similarity">
    <text evidence="2">Belongs to the UPF0758 family.</text>
</comment>
<accession>Q82UL9</accession>
<name>Y1464_NITEU</name>
<feature type="chain" id="PRO_0000190713" description="UPF0758 protein NE1464">
    <location>
        <begin position="1"/>
        <end position="224"/>
    </location>
</feature>
<feature type="domain" description="MPN" evidence="1">
    <location>
        <begin position="102"/>
        <end position="224"/>
    </location>
</feature>
<feature type="short sequence motif" description="JAMM motif" evidence="1">
    <location>
        <begin position="173"/>
        <end position="186"/>
    </location>
</feature>
<feature type="binding site" evidence="1">
    <location>
        <position position="173"/>
    </location>
    <ligand>
        <name>Zn(2+)</name>
        <dbReference type="ChEBI" id="CHEBI:29105"/>
        <note>catalytic</note>
    </ligand>
</feature>
<feature type="binding site" evidence="1">
    <location>
        <position position="175"/>
    </location>
    <ligand>
        <name>Zn(2+)</name>
        <dbReference type="ChEBI" id="CHEBI:29105"/>
        <note>catalytic</note>
    </ligand>
</feature>
<feature type="binding site" evidence="1">
    <location>
        <position position="186"/>
    </location>
    <ligand>
        <name>Zn(2+)</name>
        <dbReference type="ChEBI" id="CHEBI:29105"/>
        <note>catalytic</note>
    </ligand>
</feature>
<protein>
    <recommendedName>
        <fullName>UPF0758 protein NE1464</fullName>
    </recommendedName>
</protein>
<sequence length="224" mass="24445">MAISDWPEAERPREKLIEKGAAALSDAELLAIFLRTGITGVSAVELARKLLTHFGSLTKLCAASLHEFSELPGMGPAKFAQLQAVMEMAKRALAEELKNGDIMDSPQSVRNYLCLSLKGKPYEVFVGIFLDARHRTIVTEELFNGTLTQASVYPREVVKRALYHNAAAMIFAHNHPSGIAEPSTADEILTQSLKQALALVDVKVLDHFVIGSSEVVSFAERGLI</sequence>